<accession>Q3ZZM7</accession>
<keyword id="KW-0687">Ribonucleoprotein</keyword>
<keyword id="KW-0689">Ribosomal protein</keyword>
<keyword id="KW-0694">RNA-binding</keyword>
<keyword id="KW-0699">rRNA-binding</keyword>
<keyword id="KW-0820">tRNA-binding</keyword>
<reference key="1">
    <citation type="journal article" date="2005" name="Nat. Biotechnol.">
        <title>Genome sequence of the chlorinated compound-respiring bacterium Dehalococcoides species strain CBDB1.</title>
        <authorList>
            <person name="Kube M."/>
            <person name="Beck A."/>
            <person name="Zinder S.H."/>
            <person name="Kuhl H."/>
            <person name="Reinhardt R."/>
            <person name="Adrian L."/>
        </authorList>
    </citation>
    <scope>NUCLEOTIDE SEQUENCE [LARGE SCALE GENOMIC DNA]</scope>
    <source>
        <strain>CBDB1</strain>
    </source>
</reference>
<feature type="chain" id="PRO_0000226497" description="Small ribosomal subunit protein uS7">
    <location>
        <begin position="1"/>
        <end position="156"/>
    </location>
</feature>
<evidence type="ECO:0000255" key="1">
    <source>
        <dbReference type="HAMAP-Rule" id="MF_00480"/>
    </source>
</evidence>
<evidence type="ECO:0000305" key="2"/>
<gene>
    <name evidence="1" type="primary">rpsG</name>
    <name type="ordered locus">cbdbA435</name>
</gene>
<sequence>MPRRARKFKRAVAPDSRYNSLMLSNFINKLMMHGQKATAQRIVYDAIDIMGKQENKEGLAVFEQGLKNATPFIEVKPRRVGGATYQVPIEVRPDRAQTMAMRWIIKAARKRTGKSMAERLASEMLEASREQGAAVKKREETHKMAEANRAFAHYRW</sequence>
<protein>
    <recommendedName>
        <fullName evidence="1">Small ribosomal subunit protein uS7</fullName>
    </recommendedName>
    <alternativeName>
        <fullName evidence="2">30S ribosomal protein S7</fullName>
    </alternativeName>
</protein>
<name>RS7_DEHMC</name>
<proteinExistence type="inferred from homology"/>
<dbReference type="EMBL" id="AJ965256">
    <property type="protein sequence ID" value="CAI82636.1"/>
    <property type="molecule type" value="Genomic_DNA"/>
</dbReference>
<dbReference type="RefSeq" id="WP_011308993.1">
    <property type="nucleotide sequence ID" value="NC_007356.1"/>
</dbReference>
<dbReference type="SMR" id="Q3ZZM7"/>
<dbReference type="KEGG" id="deh:cbdbA435"/>
<dbReference type="HOGENOM" id="CLU_072226_1_1_0"/>
<dbReference type="Proteomes" id="UP000000433">
    <property type="component" value="Chromosome"/>
</dbReference>
<dbReference type="GO" id="GO:0015935">
    <property type="term" value="C:small ribosomal subunit"/>
    <property type="evidence" value="ECO:0007669"/>
    <property type="project" value="InterPro"/>
</dbReference>
<dbReference type="GO" id="GO:0019843">
    <property type="term" value="F:rRNA binding"/>
    <property type="evidence" value="ECO:0007669"/>
    <property type="project" value="UniProtKB-UniRule"/>
</dbReference>
<dbReference type="GO" id="GO:0003735">
    <property type="term" value="F:structural constituent of ribosome"/>
    <property type="evidence" value="ECO:0007669"/>
    <property type="project" value="InterPro"/>
</dbReference>
<dbReference type="GO" id="GO:0000049">
    <property type="term" value="F:tRNA binding"/>
    <property type="evidence" value="ECO:0007669"/>
    <property type="project" value="UniProtKB-UniRule"/>
</dbReference>
<dbReference type="GO" id="GO:0006412">
    <property type="term" value="P:translation"/>
    <property type="evidence" value="ECO:0007669"/>
    <property type="project" value="UniProtKB-UniRule"/>
</dbReference>
<dbReference type="CDD" id="cd14869">
    <property type="entry name" value="uS7_Bacteria"/>
    <property type="match status" value="1"/>
</dbReference>
<dbReference type="FunFam" id="1.10.455.10:FF:000001">
    <property type="entry name" value="30S ribosomal protein S7"/>
    <property type="match status" value="1"/>
</dbReference>
<dbReference type="Gene3D" id="1.10.455.10">
    <property type="entry name" value="Ribosomal protein S7 domain"/>
    <property type="match status" value="1"/>
</dbReference>
<dbReference type="HAMAP" id="MF_00480_B">
    <property type="entry name" value="Ribosomal_uS7_B"/>
    <property type="match status" value="1"/>
</dbReference>
<dbReference type="InterPro" id="IPR000235">
    <property type="entry name" value="Ribosomal_uS7"/>
</dbReference>
<dbReference type="InterPro" id="IPR005717">
    <property type="entry name" value="Ribosomal_uS7_bac/org-type"/>
</dbReference>
<dbReference type="InterPro" id="IPR023798">
    <property type="entry name" value="Ribosomal_uS7_dom"/>
</dbReference>
<dbReference type="InterPro" id="IPR036823">
    <property type="entry name" value="Ribosomal_uS7_dom_sf"/>
</dbReference>
<dbReference type="NCBIfam" id="TIGR01029">
    <property type="entry name" value="rpsG_bact"/>
    <property type="match status" value="1"/>
</dbReference>
<dbReference type="PANTHER" id="PTHR11205">
    <property type="entry name" value="RIBOSOMAL PROTEIN S7"/>
    <property type="match status" value="1"/>
</dbReference>
<dbReference type="Pfam" id="PF00177">
    <property type="entry name" value="Ribosomal_S7"/>
    <property type="match status" value="1"/>
</dbReference>
<dbReference type="PIRSF" id="PIRSF002122">
    <property type="entry name" value="RPS7p_RPS7a_RPS5e_RPS7o"/>
    <property type="match status" value="1"/>
</dbReference>
<dbReference type="SUPFAM" id="SSF47973">
    <property type="entry name" value="Ribosomal protein S7"/>
    <property type="match status" value="1"/>
</dbReference>
<comment type="function">
    <text evidence="1">One of the primary rRNA binding proteins, it binds directly to 16S rRNA where it nucleates assembly of the head domain of the 30S subunit. Is located at the subunit interface close to the decoding center, probably blocks exit of the E-site tRNA.</text>
</comment>
<comment type="subunit">
    <text evidence="1">Part of the 30S ribosomal subunit. Contacts proteins S9 and S11.</text>
</comment>
<comment type="similarity">
    <text evidence="1">Belongs to the universal ribosomal protein uS7 family.</text>
</comment>
<organism>
    <name type="scientific">Dehalococcoides mccartyi (strain CBDB1)</name>
    <dbReference type="NCBI Taxonomy" id="255470"/>
    <lineage>
        <taxon>Bacteria</taxon>
        <taxon>Bacillati</taxon>
        <taxon>Chloroflexota</taxon>
        <taxon>Dehalococcoidia</taxon>
        <taxon>Dehalococcoidales</taxon>
        <taxon>Dehalococcoidaceae</taxon>
        <taxon>Dehalococcoides</taxon>
    </lineage>
</organism>